<sequence>MFAVEMKFEVPVCTSCGKEITPREHATHFVCPNCGEAIIWRCESCRVLSVPYKCPKCGWEGP</sequence>
<comment type="cofactor">
    <cofactor evidence="4 5 6">
        <name>Zn(2+)</name>
        <dbReference type="ChEBI" id="CHEBI:29105"/>
    </cofactor>
    <text evidence="4 5 6">Binds 2 zinc ions per subunit.</text>
</comment>
<comment type="subunit">
    <text evidence="1">Crystallized in association with 70S ribosomes.</text>
</comment>
<evidence type="ECO:0000269" key="1">
    <source>
    </source>
</evidence>
<evidence type="ECO:0000305" key="2"/>
<evidence type="ECO:0000312" key="3">
    <source>
        <dbReference type="EMBL" id="BAD84300.1"/>
    </source>
</evidence>
<evidence type="ECO:0007744" key="4">
    <source>
        <dbReference type="PDB" id="6SKF"/>
    </source>
</evidence>
<evidence type="ECO:0007744" key="5">
    <source>
        <dbReference type="PDB" id="6SKG"/>
    </source>
</evidence>
<evidence type="ECO:0007744" key="6">
    <source>
        <dbReference type="PDB" id="6TH6"/>
    </source>
</evidence>
<name>Z111_THEKO</name>
<dbReference type="EMBL" id="AP006878">
    <property type="protein sequence ID" value="BAD84300.1"/>
    <property type="molecule type" value="Genomic_DNA"/>
</dbReference>
<dbReference type="PDB" id="6SKF">
    <property type="method" value="EM"/>
    <property type="resolution" value="2.95 A"/>
    <property type="chains" value="Az=1-62"/>
</dbReference>
<dbReference type="PDB" id="6SKG">
    <property type="method" value="EM"/>
    <property type="resolution" value="2.65 A"/>
    <property type="chains" value="Az=1-62"/>
</dbReference>
<dbReference type="PDB" id="6TH6">
    <property type="method" value="EM"/>
    <property type="resolution" value="2.55 A"/>
    <property type="chains" value="Az=1-62"/>
</dbReference>
<dbReference type="PDBsum" id="6SKF"/>
<dbReference type="PDBsum" id="6SKG"/>
<dbReference type="PDBsum" id="6TH6"/>
<dbReference type="EMDB" id="EMD-10223"/>
<dbReference type="EMDB" id="EMD-10224"/>
<dbReference type="EMDB" id="EMD-10503"/>
<dbReference type="SMR" id="Q5JFE2"/>
<dbReference type="FunCoup" id="Q5JFE2">
    <property type="interactions" value="59"/>
</dbReference>
<dbReference type="STRING" id="69014.TK0111"/>
<dbReference type="EnsemblBacteria" id="BAD84300">
    <property type="protein sequence ID" value="BAD84300"/>
    <property type="gene ID" value="TK0111"/>
</dbReference>
<dbReference type="KEGG" id="tko:TK0111"/>
<dbReference type="PATRIC" id="fig|69014.16.peg.111"/>
<dbReference type="eggNOG" id="arCOG01989">
    <property type="taxonomic scope" value="Archaea"/>
</dbReference>
<dbReference type="HOGENOM" id="CLU_196471_1_0_2"/>
<dbReference type="InParanoid" id="Q5JFE2"/>
<dbReference type="PhylomeDB" id="Q5JFE2"/>
<dbReference type="Proteomes" id="UP000000536">
    <property type="component" value="Chromosome"/>
</dbReference>
<dbReference type="GO" id="GO:0008270">
    <property type="term" value="F:zinc ion binding"/>
    <property type="evidence" value="ECO:0007669"/>
    <property type="project" value="UniProtKB-KW"/>
</dbReference>
<dbReference type="Gene3D" id="2.20.28.10">
    <property type="match status" value="1"/>
</dbReference>
<dbReference type="InterPro" id="IPR044720">
    <property type="entry name" value="HVO_2753-like"/>
</dbReference>
<dbReference type="InterPro" id="IPR011668">
    <property type="entry name" value="HVO_2753-like_ZBP"/>
</dbReference>
<dbReference type="NCBIfam" id="NF011481">
    <property type="entry name" value="PRK14890.1"/>
    <property type="match status" value="1"/>
</dbReference>
<dbReference type="PANTHER" id="PTHR40733:SF1">
    <property type="entry name" value="SMALL ZINC FINGER PROTEIN HVO-2753-LIKE ZINC-BINDING POCKET DOMAIN-CONTAINING PROTEIN"/>
    <property type="match status" value="1"/>
</dbReference>
<dbReference type="PANTHER" id="PTHR40733">
    <property type="entry name" value="ZINC-RIBBON RNA-BINDING PROTEIN INVOLVED IN TRANSLATION-RELATED"/>
    <property type="match status" value="1"/>
</dbReference>
<dbReference type="Pfam" id="PF07754">
    <property type="entry name" value="HVO_2753_ZBP"/>
    <property type="match status" value="1"/>
</dbReference>
<accession>Q5JFE2</accession>
<reference evidence="3" key="1">
    <citation type="journal article" date="2005" name="Genome Res.">
        <title>Complete genome sequence of the hyperthermophilic archaeon Thermococcus kodakaraensis KOD1 and comparison with Pyrococcus genomes.</title>
        <authorList>
            <person name="Fukui T."/>
            <person name="Atomi H."/>
            <person name="Kanai T."/>
            <person name="Matsumi R."/>
            <person name="Fujiwara S."/>
            <person name="Imanaka T."/>
        </authorList>
    </citation>
    <scope>NUCLEOTIDE SEQUENCE [LARGE SCALE GENOMIC DNA]</scope>
    <source>
        <strain>ATCC BAA-918 / JCM 12380 / KOD1</strain>
    </source>
</reference>
<reference evidence="4 5" key="2">
    <citation type="journal article" date="2020" name="Nature">
        <title>Dynamic RNA acetylation revealed by quantitative cross-evolutionary mapping.</title>
        <authorList>
            <person name="Sas-Chen A."/>
            <person name="Thomas J.M."/>
            <person name="Matzov D."/>
            <person name="Taoka M."/>
            <person name="Nance K.D."/>
            <person name="Nir R."/>
            <person name="Bryson K.M."/>
            <person name="Shachar R."/>
            <person name="Liman G.L.S."/>
            <person name="Burkhart B.W."/>
            <person name="Gamage S.T."/>
            <person name="Nobe Y."/>
            <person name="Briney C.A."/>
            <person name="Levy M.J."/>
            <person name="Fuchs R.T."/>
            <person name="Robb G.B."/>
            <person name="Hartmann J."/>
            <person name="Sharma S."/>
            <person name="Lin Q."/>
            <person name="Florens L."/>
            <person name="Washburn M.P."/>
            <person name="Isobe T."/>
            <person name="Santangelo T.J."/>
            <person name="Shalev-Benami M."/>
            <person name="Meier J.L."/>
            <person name="Schwartz S."/>
        </authorList>
    </citation>
    <scope>STRUCTURE BY ELECTRON MICROSCOPY (2.55 ANGSTROMS)</scope>
    <scope>COFACTOR</scope>
    <source>
        <strain>ATCC BAA-918 / TS559</strain>
    </source>
</reference>
<proteinExistence type="evidence at protein level"/>
<feature type="chain" id="PRO_0000461768" description="Double zinc ribbon protein TK0111">
    <location>
        <begin position="1"/>
        <end position="62"/>
    </location>
</feature>
<feature type="binding site" evidence="4 5 6">
    <location>
        <position position="13"/>
    </location>
    <ligand>
        <name>Zn(2+)</name>
        <dbReference type="ChEBI" id="CHEBI:29105"/>
        <label>1</label>
    </ligand>
</feature>
<feature type="binding site" evidence="4 5 6">
    <location>
        <position position="16"/>
    </location>
    <ligand>
        <name>Zn(2+)</name>
        <dbReference type="ChEBI" id="CHEBI:29105"/>
        <label>1</label>
    </ligand>
</feature>
<feature type="binding site" evidence="4 5 6">
    <location>
        <position position="31"/>
    </location>
    <ligand>
        <name>Zn(2+)</name>
        <dbReference type="ChEBI" id="CHEBI:29105"/>
        <label>2</label>
    </ligand>
</feature>
<feature type="binding site" evidence="4 5 6">
    <location>
        <position position="34"/>
    </location>
    <ligand>
        <name>Zn(2+)</name>
        <dbReference type="ChEBI" id="CHEBI:29105"/>
        <label>2</label>
    </ligand>
</feature>
<feature type="binding site" evidence="4 5 6">
    <location>
        <position position="42"/>
    </location>
    <ligand>
        <name>Zn(2+)</name>
        <dbReference type="ChEBI" id="CHEBI:29105"/>
        <label>1</label>
    </ligand>
</feature>
<feature type="binding site" evidence="4 5 6">
    <location>
        <position position="45"/>
    </location>
    <ligand>
        <name>Zn(2+)</name>
        <dbReference type="ChEBI" id="CHEBI:29105"/>
        <label>1</label>
    </ligand>
</feature>
<feature type="binding site" evidence="4 5 6">
    <location>
        <position position="54"/>
    </location>
    <ligand>
        <name>Zn(2+)</name>
        <dbReference type="ChEBI" id="CHEBI:29105"/>
        <label>2</label>
    </ligand>
</feature>
<feature type="binding site" evidence="4 5">
    <location>
        <position position="57"/>
    </location>
    <ligand>
        <name>Zn(2+)</name>
        <dbReference type="ChEBI" id="CHEBI:29105"/>
        <label>2</label>
    </ligand>
</feature>
<gene>
    <name evidence="3" type="ordered locus">TK0111</name>
</gene>
<protein>
    <recommendedName>
        <fullName evidence="2">Double zinc ribbon protein TK0111</fullName>
    </recommendedName>
</protein>
<organism>
    <name type="scientific">Thermococcus kodakarensis (strain ATCC BAA-918 / JCM 12380 / KOD1)</name>
    <name type="common">Pyrococcus kodakaraensis (strain KOD1)</name>
    <dbReference type="NCBI Taxonomy" id="69014"/>
    <lineage>
        <taxon>Archaea</taxon>
        <taxon>Methanobacteriati</taxon>
        <taxon>Methanobacteriota</taxon>
        <taxon>Thermococci</taxon>
        <taxon>Thermococcales</taxon>
        <taxon>Thermococcaceae</taxon>
        <taxon>Thermococcus</taxon>
    </lineage>
</organism>
<keyword id="KW-0002">3D-structure</keyword>
<keyword id="KW-0479">Metal-binding</keyword>
<keyword id="KW-1185">Reference proteome</keyword>
<keyword id="KW-0862">Zinc</keyword>
<keyword id="KW-0863">Zinc-finger</keyword>